<evidence type="ECO:0000255" key="1">
    <source>
        <dbReference type="HAMAP-Rule" id="MF_01645"/>
    </source>
</evidence>
<organism>
    <name type="scientific">Salmonella choleraesuis (strain SC-B67)</name>
    <dbReference type="NCBI Taxonomy" id="321314"/>
    <lineage>
        <taxon>Bacteria</taxon>
        <taxon>Pseudomonadati</taxon>
        <taxon>Pseudomonadota</taxon>
        <taxon>Gammaproteobacteria</taxon>
        <taxon>Enterobacterales</taxon>
        <taxon>Enterobacteriaceae</taxon>
        <taxon>Salmonella</taxon>
    </lineage>
</organism>
<keyword id="KW-0378">Hydrolase</keyword>
<keyword id="KW-0479">Metal-binding</keyword>
<keyword id="KW-0659">Purine metabolism</keyword>
<keyword id="KW-0862">Zinc</keyword>
<accession>Q57S43</accession>
<protein>
    <recommendedName>
        <fullName evidence="1">Allantoinase</fullName>
        <ecNumber evidence="1">3.5.2.5</ecNumber>
    </recommendedName>
    <alternativeName>
        <fullName evidence="1">Allantoin-utilizing enzyme</fullName>
    </alternativeName>
</protein>
<reference key="1">
    <citation type="journal article" date="2005" name="Nucleic Acids Res.">
        <title>The genome sequence of Salmonella enterica serovar Choleraesuis, a highly invasive and resistant zoonotic pathogen.</title>
        <authorList>
            <person name="Chiu C.-H."/>
            <person name="Tang P."/>
            <person name="Chu C."/>
            <person name="Hu S."/>
            <person name="Bao Q."/>
            <person name="Yu J."/>
            <person name="Chou Y.-Y."/>
            <person name="Wang H.-S."/>
            <person name="Lee Y.-S."/>
        </authorList>
    </citation>
    <scope>NUCLEOTIDE SEQUENCE [LARGE SCALE GENOMIC DNA]</scope>
    <source>
        <strain>SC-B67</strain>
    </source>
</reference>
<feature type="chain" id="PRO_0000317682" description="Allantoinase">
    <location>
        <begin position="1"/>
        <end position="453"/>
    </location>
</feature>
<feature type="binding site" evidence="1">
    <location>
        <position position="59"/>
    </location>
    <ligand>
        <name>Zn(2+)</name>
        <dbReference type="ChEBI" id="CHEBI:29105"/>
        <label>1</label>
    </ligand>
</feature>
<feature type="binding site" evidence="1">
    <location>
        <position position="61"/>
    </location>
    <ligand>
        <name>Zn(2+)</name>
        <dbReference type="ChEBI" id="CHEBI:29105"/>
        <label>1</label>
    </ligand>
</feature>
<feature type="binding site" description="via carbamate group" evidence="1">
    <location>
        <position position="146"/>
    </location>
    <ligand>
        <name>Zn(2+)</name>
        <dbReference type="ChEBI" id="CHEBI:29105"/>
        <label>1</label>
    </ligand>
</feature>
<feature type="binding site" description="via carbamate group" evidence="1">
    <location>
        <position position="146"/>
    </location>
    <ligand>
        <name>Zn(2+)</name>
        <dbReference type="ChEBI" id="CHEBI:29105"/>
        <label>2</label>
    </ligand>
</feature>
<feature type="binding site" evidence="1">
    <location>
        <position position="186"/>
    </location>
    <ligand>
        <name>Zn(2+)</name>
        <dbReference type="ChEBI" id="CHEBI:29105"/>
        <label>2</label>
    </ligand>
</feature>
<feature type="binding site" evidence="1">
    <location>
        <position position="242"/>
    </location>
    <ligand>
        <name>Zn(2+)</name>
        <dbReference type="ChEBI" id="CHEBI:29105"/>
        <label>2</label>
    </ligand>
</feature>
<feature type="binding site" evidence="1">
    <location>
        <position position="315"/>
    </location>
    <ligand>
        <name>Zn(2+)</name>
        <dbReference type="ChEBI" id="CHEBI:29105"/>
        <label>1</label>
    </ligand>
</feature>
<feature type="modified residue" description="N6-carboxylysine" evidence="1">
    <location>
        <position position="146"/>
    </location>
</feature>
<gene>
    <name evidence="1" type="primary">allB</name>
    <name type="ordered locus">SCH_0562</name>
</gene>
<sequence length="453" mass="49959">MSFDLIIKNGTVILENEARVIDIAVQGGKIAAIGENLEEAKNVLDATGLIVSPGMVDAHTHISEPGRTHWEGYETGTRAAAKGGITTMIEMPLNQLPATVDRETIELKFDAAKGKLTIDAAQLGGLVSYNLDRLHELDEVGVVGFKCFVATCGDRGIDNDFRDVNDWQFYKGAQKLGEMDQTVLVHCENALICDELGEEAKREGRVTAHDYVASRPVFTEVEAIRRVLYLAKAAGCRLHVCHISSPEGVEEVTRARQEGQDVTCESCPHYFVLDTDQFEEIGTLAKCSPPIRDQENQKGMWEKLFNGEIDCLVSDHSPCPPEMKAGNIMQAWGGIAGLQNCMDVMFDEAVQKRGMSLPMFGKLMATNAADIFGLKHKGRIAPGKDADLVFIQPDSSYVLKNEDLEYRHKVSPYVGRTIGARITKTILRGDVIYDIEHGFPVPPKGQFILKHQQ</sequence>
<dbReference type="EC" id="3.5.2.5" evidence="1"/>
<dbReference type="EMBL" id="AE017220">
    <property type="protein sequence ID" value="AAX64468.1"/>
    <property type="molecule type" value="Genomic_DNA"/>
</dbReference>
<dbReference type="RefSeq" id="WP_011264212.1">
    <property type="nucleotide sequence ID" value="NC_006905.1"/>
</dbReference>
<dbReference type="SMR" id="Q57S43"/>
<dbReference type="KEGG" id="sec:SCH_0562"/>
<dbReference type="HOGENOM" id="CLU_015572_4_2_6"/>
<dbReference type="UniPathway" id="UPA00395">
    <property type="reaction ID" value="UER00653"/>
</dbReference>
<dbReference type="Proteomes" id="UP000000538">
    <property type="component" value="Chromosome"/>
</dbReference>
<dbReference type="GO" id="GO:0005737">
    <property type="term" value="C:cytoplasm"/>
    <property type="evidence" value="ECO:0007669"/>
    <property type="project" value="TreeGrafter"/>
</dbReference>
<dbReference type="GO" id="GO:0004038">
    <property type="term" value="F:allantoinase activity"/>
    <property type="evidence" value="ECO:0007669"/>
    <property type="project" value="UniProtKB-UniRule"/>
</dbReference>
<dbReference type="GO" id="GO:0050897">
    <property type="term" value="F:cobalt ion binding"/>
    <property type="evidence" value="ECO:0007669"/>
    <property type="project" value="InterPro"/>
</dbReference>
<dbReference type="GO" id="GO:0008270">
    <property type="term" value="F:zinc ion binding"/>
    <property type="evidence" value="ECO:0007669"/>
    <property type="project" value="InterPro"/>
</dbReference>
<dbReference type="GO" id="GO:0000256">
    <property type="term" value="P:allantoin catabolic process"/>
    <property type="evidence" value="ECO:0007669"/>
    <property type="project" value="UniProtKB-UniRule"/>
</dbReference>
<dbReference type="GO" id="GO:0006145">
    <property type="term" value="P:purine nucleobase catabolic process"/>
    <property type="evidence" value="ECO:0007669"/>
    <property type="project" value="TreeGrafter"/>
</dbReference>
<dbReference type="CDD" id="cd01315">
    <property type="entry name" value="L-HYD_ALN"/>
    <property type="match status" value="1"/>
</dbReference>
<dbReference type="FunFam" id="3.20.20.140:FF:000013">
    <property type="entry name" value="Allantoinase"/>
    <property type="match status" value="1"/>
</dbReference>
<dbReference type="Gene3D" id="3.20.20.140">
    <property type="entry name" value="Metal-dependent hydrolases"/>
    <property type="match status" value="1"/>
</dbReference>
<dbReference type="HAMAP" id="MF_01645">
    <property type="entry name" value="Hydantoinase"/>
    <property type="match status" value="1"/>
</dbReference>
<dbReference type="InterPro" id="IPR017593">
    <property type="entry name" value="Allantoinase"/>
</dbReference>
<dbReference type="InterPro" id="IPR047604">
    <property type="entry name" value="Allantoinase_bact"/>
</dbReference>
<dbReference type="InterPro" id="IPR006680">
    <property type="entry name" value="Amidohydro-rel"/>
</dbReference>
<dbReference type="InterPro" id="IPR050138">
    <property type="entry name" value="DHOase/Allantoinase_Hydrolase"/>
</dbReference>
<dbReference type="InterPro" id="IPR011059">
    <property type="entry name" value="Metal-dep_hydrolase_composite"/>
</dbReference>
<dbReference type="InterPro" id="IPR032466">
    <property type="entry name" value="Metal_Hydrolase"/>
</dbReference>
<dbReference type="NCBIfam" id="TIGR03178">
    <property type="entry name" value="allantoinase"/>
    <property type="match status" value="1"/>
</dbReference>
<dbReference type="NCBIfam" id="NF005960">
    <property type="entry name" value="PRK08044.1"/>
    <property type="match status" value="1"/>
</dbReference>
<dbReference type="PANTHER" id="PTHR43668">
    <property type="entry name" value="ALLANTOINASE"/>
    <property type="match status" value="1"/>
</dbReference>
<dbReference type="PANTHER" id="PTHR43668:SF4">
    <property type="entry name" value="ALLANTOINASE"/>
    <property type="match status" value="1"/>
</dbReference>
<dbReference type="Pfam" id="PF01979">
    <property type="entry name" value="Amidohydro_1"/>
    <property type="match status" value="1"/>
</dbReference>
<dbReference type="SUPFAM" id="SSF51338">
    <property type="entry name" value="Composite domain of metallo-dependent hydrolases"/>
    <property type="match status" value="1"/>
</dbReference>
<dbReference type="SUPFAM" id="SSF51556">
    <property type="entry name" value="Metallo-dependent hydrolases"/>
    <property type="match status" value="1"/>
</dbReference>
<comment type="function">
    <text evidence="1">Catalyzes the conversion of allantoin (5-ureidohydantoin) to allantoic acid by hydrolytic cleavage of the five-member hydantoin ring.</text>
</comment>
<comment type="catalytic activity">
    <reaction evidence="1">
        <text>(S)-allantoin + H2O = allantoate + H(+)</text>
        <dbReference type="Rhea" id="RHEA:17029"/>
        <dbReference type="ChEBI" id="CHEBI:15377"/>
        <dbReference type="ChEBI" id="CHEBI:15378"/>
        <dbReference type="ChEBI" id="CHEBI:15678"/>
        <dbReference type="ChEBI" id="CHEBI:17536"/>
        <dbReference type="EC" id="3.5.2.5"/>
    </reaction>
</comment>
<comment type="cofactor">
    <cofactor evidence="1">
        <name>Zn(2+)</name>
        <dbReference type="ChEBI" id="CHEBI:29105"/>
    </cofactor>
    <text evidence="1">Binds 2 Zn(2+) ions per subunit.</text>
</comment>
<comment type="pathway">
    <text evidence="1">Nitrogen metabolism; (S)-allantoin degradation; allantoate from (S)-allantoin: step 1/1.</text>
</comment>
<comment type="subunit">
    <text evidence="1">Homotetramer.</text>
</comment>
<comment type="PTM">
    <text evidence="1">Carboxylation allows a single lysine to coordinate two zinc ions.</text>
</comment>
<comment type="similarity">
    <text evidence="1">Belongs to the metallo-dependent hydrolases superfamily. Allantoinase family.</text>
</comment>
<name>ALLB_SALCH</name>
<proteinExistence type="inferred from homology"/>